<dbReference type="SMR" id="P31330"/>
<dbReference type="STRING" id="52561.SAMN05421830_104280"/>
<dbReference type="GO" id="GO:0042597">
    <property type="term" value="C:periplasmic space"/>
    <property type="evidence" value="ECO:0007669"/>
    <property type="project" value="UniProtKB-SubCell"/>
</dbReference>
<dbReference type="GO" id="GO:0009055">
    <property type="term" value="F:electron transfer activity"/>
    <property type="evidence" value="ECO:0007669"/>
    <property type="project" value="InterPro"/>
</dbReference>
<dbReference type="GO" id="GO:0020037">
    <property type="term" value="F:heme binding"/>
    <property type="evidence" value="ECO:0007669"/>
    <property type="project" value="InterPro"/>
</dbReference>
<dbReference type="GO" id="GO:0046872">
    <property type="term" value="F:metal ion binding"/>
    <property type="evidence" value="ECO:0007669"/>
    <property type="project" value="UniProtKB-KW"/>
</dbReference>
<dbReference type="Gene3D" id="1.10.760.10">
    <property type="entry name" value="Cytochrome c-like domain"/>
    <property type="match status" value="1"/>
</dbReference>
<dbReference type="InterPro" id="IPR009056">
    <property type="entry name" value="Cyt_c-like_dom"/>
</dbReference>
<dbReference type="InterPro" id="IPR036909">
    <property type="entry name" value="Cyt_c-like_dom_sf"/>
</dbReference>
<dbReference type="Pfam" id="PF13442">
    <property type="entry name" value="Cytochrome_CBB3"/>
    <property type="match status" value="1"/>
</dbReference>
<dbReference type="SUPFAM" id="SSF46626">
    <property type="entry name" value="Cytochrome c"/>
    <property type="match status" value="1"/>
</dbReference>
<dbReference type="PROSITE" id="PS51007">
    <property type="entry name" value="CYTC"/>
    <property type="match status" value="1"/>
</dbReference>
<comment type="function">
    <text>Natural electron acceptor for a formate dehydrogenase.</text>
</comment>
<comment type="subcellular location">
    <subcellularLocation>
        <location>Periplasm</location>
    </subcellularLocation>
</comment>
<comment type="PTM">
    <text>Binds 1 heme c group covalently per subunit.</text>
</comment>
<accession>P31330</accession>
<protein>
    <recommendedName>
        <fullName>Cytochrome c-553</fullName>
    </recommendedName>
    <alternativeName>
        <fullName>Cytochrome c553</fullName>
    </alternativeName>
</protein>
<sequence>SGDLGAERYAKMCKSCHGADGSNAAMSRALKGLPAEEVKAALIGYKEQTYGGKKKGMMERVVKSLTDEDIEVLATHIGTF</sequence>
<keyword id="KW-0903">Direct protein sequencing</keyword>
<keyword id="KW-0249">Electron transport</keyword>
<keyword id="KW-0349">Heme</keyword>
<keyword id="KW-0408">Iron</keyword>
<keyword id="KW-0479">Metal-binding</keyword>
<keyword id="KW-0574">Periplasm</keyword>
<keyword id="KW-0813">Transport</keyword>
<name>CY553_DESNO</name>
<feature type="chain" id="PRO_0000108404" description="Cytochrome c-553">
    <location>
        <begin position="1"/>
        <end position="80"/>
    </location>
</feature>
<feature type="binding site" description="covalent">
    <location>
        <position position="13"/>
    </location>
    <ligand>
        <name>heme c</name>
        <dbReference type="ChEBI" id="CHEBI:61717"/>
    </ligand>
</feature>
<feature type="binding site" description="covalent">
    <location>
        <position position="16"/>
    </location>
    <ligand>
        <name>heme c</name>
        <dbReference type="ChEBI" id="CHEBI:61717"/>
    </ligand>
</feature>
<feature type="binding site" description="axial binding residue">
    <location>
        <position position="17"/>
    </location>
    <ligand>
        <name>heme c</name>
        <dbReference type="ChEBI" id="CHEBI:61717"/>
    </ligand>
    <ligandPart>
        <name>Fe</name>
        <dbReference type="ChEBI" id="CHEBI:18248"/>
    </ligandPart>
</feature>
<feature type="binding site" description="axial binding residue">
    <location>
        <position position="58"/>
    </location>
    <ligand>
        <name>heme c</name>
        <dbReference type="ChEBI" id="CHEBI:61717"/>
    </ligand>
    <ligandPart>
        <name>Fe</name>
        <dbReference type="ChEBI" id="CHEBI:18248"/>
    </ligandPart>
</feature>
<organism>
    <name type="scientific">Desulfomicrobium norvegicum (strain DSM 1741 / NCIMB 8310)</name>
    <name type="common">Desulfovibrio baculatus (strain Norway 4)</name>
    <name type="synonym">Desulfovibrio desulfuricans (strain Norway 4)</name>
    <dbReference type="NCBI Taxonomy" id="52561"/>
    <lineage>
        <taxon>Bacteria</taxon>
        <taxon>Pseudomonadati</taxon>
        <taxon>Thermodesulfobacteriota</taxon>
        <taxon>Desulfovibrionia</taxon>
        <taxon>Desulfovibrionales</taxon>
        <taxon>Desulfomicrobiaceae</taxon>
        <taxon>Desulfomicrobium</taxon>
    </lineage>
</organism>
<proteinExistence type="evidence at protein level"/>
<reference key="1">
    <citation type="journal article" date="1993" name="Biochim. Biophys. Acta">
        <title>Amino-acid sequence of cytochrome c-553 from Desulfovibrio desulfuricans Norway.</title>
        <authorList>
            <person name="Bruschi M."/>
            <person name="Woudstra M."/>
            <person name="Campese D."/>
            <person name="Bonicel J."/>
        </authorList>
    </citation>
    <scope>PROTEIN SEQUENCE</scope>
</reference>